<reference key="1">
    <citation type="journal article" date="2008" name="PLoS ONE">
        <title>Environmental adaptation: genomic analysis of the piezotolerant and psychrotolerant deep-sea iron reducing bacterium Shewanella piezotolerans WP3.</title>
        <authorList>
            <person name="Wang F."/>
            <person name="Wang J."/>
            <person name="Jian H."/>
            <person name="Zhang B."/>
            <person name="Li S."/>
            <person name="Wang F."/>
            <person name="Zeng X."/>
            <person name="Gao L."/>
            <person name="Bartlett D.H."/>
            <person name="Yu J."/>
            <person name="Hu S."/>
            <person name="Xiao X."/>
        </authorList>
    </citation>
    <scope>NUCLEOTIDE SEQUENCE [LARGE SCALE GENOMIC DNA]</scope>
    <source>
        <strain>WP3 / JCM 13877</strain>
    </source>
</reference>
<dbReference type="EC" id="2.7.7.60" evidence="1"/>
<dbReference type="EMBL" id="CP000472">
    <property type="protein sequence ID" value="ACJ28145.1"/>
    <property type="molecule type" value="Genomic_DNA"/>
</dbReference>
<dbReference type="RefSeq" id="WP_020911523.1">
    <property type="nucleotide sequence ID" value="NC_011566.1"/>
</dbReference>
<dbReference type="SMR" id="B8CJP8"/>
<dbReference type="STRING" id="225849.swp_1358"/>
<dbReference type="KEGG" id="swp:swp_1358"/>
<dbReference type="eggNOG" id="COG1211">
    <property type="taxonomic scope" value="Bacteria"/>
</dbReference>
<dbReference type="HOGENOM" id="CLU_061281_3_1_6"/>
<dbReference type="OrthoDB" id="9806837at2"/>
<dbReference type="UniPathway" id="UPA00056">
    <property type="reaction ID" value="UER00093"/>
</dbReference>
<dbReference type="Proteomes" id="UP000000753">
    <property type="component" value="Chromosome"/>
</dbReference>
<dbReference type="GO" id="GO:0050518">
    <property type="term" value="F:2-C-methyl-D-erythritol 4-phosphate cytidylyltransferase activity"/>
    <property type="evidence" value="ECO:0007669"/>
    <property type="project" value="UniProtKB-UniRule"/>
</dbReference>
<dbReference type="GO" id="GO:0019288">
    <property type="term" value="P:isopentenyl diphosphate biosynthetic process, methylerythritol 4-phosphate pathway"/>
    <property type="evidence" value="ECO:0007669"/>
    <property type="project" value="UniProtKB-UniRule"/>
</dbReference>
<dbReference type="CDD" id="cd02516">
    <property type="entry name" value="CDP-ME_synthetase"/>
    <property type="match status" value="1"/>
</dbReference>
<dbReference type="FunFam" id="3.90.550.10:FF:000003">
    <property type="entry name" value="2-C-methyl-D-erythritol 4-phosphate cytidylyltransferase"/>
    <property type="match status" value="1"/>
</dbReference>
<dbReference type="Gene3D" id="3.90.550.10">
    <property type="entry name" value="Spore Coat Polysaccharide Biosynthesis Protein SpsA, Chain A"/>
    <property type="match status" value="1"/>
</dbReference>
<dbReference type="HAMAP" id="MF_00108">
    <property type="entry name" value="IspD"/>
    <property type="match status" value="1"/>
</dbReference>
<dbReference type="InterPro" id="IPR001228">
    <property type="entry name" value="IspD"/>
</dbReference>
<dbReference type="InterPro" id="IPR034683">
    <property type="entry name" value="IspD/TarI"/>
</dbReference>
<dbReference type="InterPro" id="IPR050088">
    <property type="entry name" value="IspD/TarI_cytidylyltransf_bact"/>
</dbReference>
<dbReference type="InterPro" id="IPR018294">
    <property type="entry name" value="ISPD_synthase_CS"/>
</dbReference>
<dbReference type="InterPro" id="IPR029044">
    <property type="entry name" value="Nucleotide-diphossugar_trans"/>
</dbReference>
<dbReference type="NCBIfam" id="TIGR00453">
    <property type="entry name" value="ispD"/>
    <property type="match status" value="1"/>
</dbReference>
<dbReference type="PANTHER" id="PTHR32125">
    <property type="entry name" value="2-C-METHYL-D-ERYTHRITOL 4-PHOSPHATE CYTIDYLYLTRANSFERASE, CHLOROPLASTIC"/>
    <property type="match status" value="1"/>
</dbReference>
<dbReference type="PANTHER" id="PTHR32125:SF4">
    <property type="entry name" value="2-C-METHYL-D-ERYTHRITOL 4-PHOSPHATE CYTIDYLYLTRANSFERASE, CHLOROPLASTIC"/>
    <property type="match status" value="1"/>
</dbReference>
<dbReference type="Pfam" id="PF01128">
    <property type="entry name" value="IspD"/>
    <property type="match status" value="1"/>
</dbReference>
<dbReference type="SUPFAM" id="SSF53448">
    <property type="entry name" value="Nucleotide-diphospho-sugar transferases"/>
    <property type="match status" value="1"/>
</dbReference>
<dbReference type="PROSITE" id="PS01295">
    <property type="entry name" value="ISPD"/>
    <property type="match status" value="1"/>
</dbReference>
<proteinExistence type="inferred from homology"/>
<protein>
    <recommendedName>
        <fullName evidence="1">2-C-methyl-D-erythritol 4-phosphate cytidylyltransferase</fullName>
        <ecNumber evidence="1">2.7.7.60</ecNumber>
    </recommendedName>
    <alternativeName>
        <fullName evidence="1">4-diphosphocytidyl-2C-methyl-D-erythritol synthase</fullName>
    </alternativeName>
    <alternativeName>
        <fullName evidence="1">MEP cytidylyltransferase</fullName>
        <shortName evidence="1">MCT</shortName>
    </alternativeName>
</protein>
<comment type="function">
    <text evidence="1">Catalyzes the formation of 4-diphosphocytidyl-2-C-methyl-D-erythritol from CTP and 2-C-methyl-D-erythritol 4-phosphate (MEP).</text>
</comment>
<comment type="catalytic activity">
    <reaction evidence="1">
        <text>2-C-methyl-D-erythritol 4-phosphate + CTP + H(+) = 4-CDP-2-C-methyl-D-erythritol + diphosphate</text>
        <dbReference type="Rhea" id="RHEA:13429"/>
        <dbReference type="ChEBI" id="CHEBI:15378"/>
        <dbReference type="ChEBI" id="CHEBI:33019"/>
        <dbReference type="ChEBI" id="CHEBI:37563"/>
        <dbReference type="ChEBI" id="CHEBI:57823"/>
        <dbReference type="ChEBI" id="CHEBI:58262"/>
        <dbReference type="EC" id="2.7.7.60"/>
    </reaction>
</comment>
<comment type="pathway">
    <text evidence="1">Isoprenoid biosynthesis; isopentenyl diphosphate biosynthesis via DXP pathway; isopentenyl diphosphate from 1-deoxy-D-xylulose 5-phosphate: step 2/6.</text>
</comment>
<comment type="similarity">
    <text evidence="1">Belongs to the IspD/TarI cytidylyltransferase family. IspD subfamily.</text>
</comment>
<evidence type="ECO:0000255" key="1">
    <source>
        <dbReference type="HAMAP-Rule" id="MF_00108"/>
    </source>
</evidence>
<name>ISPD_SHEPW</name>
<keyword id="KW-0414">Isoprene biosynthesis</keyword>
<keyword id="KW-0548">Nucleotidyltransferase</keyword>
<keyword id="KW-0808">Transferase</keyword>
<gene>
    <name evidence="1" type="primary">ispD</name>
    <name type="ordered locus">swp_1358</name>
</gene>
<accession>B8CJP8</accession>
<organism>
    <name type="scientific">Shewanella piezotolerans (strain WP3 / JCM 13877)</name>
    <dbReference type="NCBI Taxonomy" id="225849"/>
    <lineage>
        <taxon>Bacteria</taxon>
        <taxon>Pseudomonadati</taxon>
        <taxon>Pseudomonadota</taxon>
        <taxon>Gammaproteobacteria</taxon>
        <taxon>Alteromonadales</taxon>
        <taxon>Shewanellaceae</taxon>
        <taxon>Shewanella</taxon>
    </lineage>
</organism>
<sequence length="231" mass="24959">MSQSTNQIIAIVPAAGIGSRMGAEVPKQYLALNEQTILGHTLDCLLNHPQIAQVIVALNPEDKHFCLLPQAQHKKLLTVTGGNERADSVLAALQQADENSWVLVHDAARPCLSHLDIDKLIASTSTFPQGAILGAPVRDTMKRTGEHGEISNTVCRDRLWHALTPQYFQAKQLKVNLRAALAAGAKVTDEASAMEWAGVMPGIVSGRADNIKVTHPDDLQLASLFLKNLGR</sequence>
<feature type="chain" id="PRO_1000191070" description="2-C-methyl-D-erythritol 4-phosphate cytidylyltransferase">
    <location>
        <begin position="1"/>
        <end position="231"/>
    </location>
</feature>
<feature type="site" description="Transition state stabilizer" evidence="1">
    <location>
        <position position="20"/>
    </location>
</feature>
<feature type="site" description="Transition state stabilizer" evidence="1">
    <location>
        <position position="27"/>
    </location>
</feature>
<feature type="site" description="Positions MEP for the nucleophilic attack" evidence="1">
    <location>
        <position position="156"/>
    </location>
</feature>
<feature type="site" description="Positions MEP for the nucleophilic attack" evidence="1">
    <location>
        <position position="212"/>
    </location>
</feature>